<organism>
    <name type="scientific">Bos taurus</name>
    <name type="common">Bovine</name>
    <dbReference type="NCBI Taxonomy" id="9913"/>
    <lineage>
        <taxon>Eukaryota</taxon>
        <taxon>Metazoa</taxon>
        <taxon>Chordata</taxon>
        <taxon>Craniata</taxon>
        <taxon>Vertebrata</taxon>
        <taxon>Euteleostomi</taxon>
        <taxon>Mammalia</taxon>
        <taxon>Eutheria</taxon>
        <taxon>Laurasiatheria</taxon>
        <taxon>Artiodactyla</taxon>
        <taxon>Ruminantia</taxon>
        <taxon>Pecora</taxon>
        <taxon>Bovidae</taxon>
        <taxon>Bovinae</taxon>
        <taxon>Bos</taxon>
    </lineage>
</organism>
<feature type="signal peptide" evidence="4">
    <location>
        <begin position="1"/>
        <end position="19"/>
    </location>
</feature>
<feature type="chain" id="PRO_0000289139" description="Group 3 secretory phospholipase A2">
    <location>
        <begin position="20"/>
        <end position="501"/>
    </location>
</feature>
<feature type="region of interest" description="Disordered" evidence="6">
    <location>
        <begin position="119"/>
        <end position="139"/>
    </location>
</feature>
<feature type="region of interest" description="Phospholipase A2-like">
    <location>
        <begin position="150"/>
        <end position="291"/>
    </location>
</feature>
<feature type="region of interest" description="Disordered" evidence="6">
    <location>
        <begin position="284"/>
        <end position="339"/>
    </location>
</feature>
<feature type="compositionally biased region" description="Polar residues" evidence="6">
    <location>
        <begin position="284"/>
        <end position="298"/>
    </location>
</feature>
<feature type="active site" evidence="5">
    <location>
        <position position="184"/>
    </location>
</feature>
<feature type="active site" evidence="1">
    <location>
        <position position="214"/>
    </location>
</feature>
<feature type="binding site" evidence="1">
    <location>
        <position position="158"/>
    </location>
    <ligand>
        <name>Ca(2+)</name>
        <dbReference type="ChEBI" id="CHEBI:29108"/>
    </ligand>
</feature>
<feature type="binding site" evidence="1">
    <location>
        <position position="160"/>
    </location>
    <ligand>
        <name>Ca(2+)</name>
        <dbReference type="ChEBI" id="CHEBI:29108"/>
    </ligand>
</feature>
<feature type="binding site" evidence="1">
    <location>
        <position position="162"/>
    </location>
    <ligand>
        <name>Ca(2+)</name>
        <dbReference type="ChEBI" id="CHEBI:29108"/>
    </ligand>
</feature>
<feature type="binding site" evidence="1">
    <location>
        <position position="185"/>
    </location>
    <ligand>
        <name>Ca(2+)</name>
        <dbReference type="ChEBI" id="CHEBI:29108"/>
    </ligand>
</feature>
<feature type="glycosylation site" description="N-linked (GlcNAc...) asparagine" evidence="4">
    <location>
        <position position="167"/>
    </location>
</feature>
<feature type="glycosylation site" description="N-linked (GlcNAc...) asparagine" evidence="4">
    <location>
        <position position="280"/>
    </location>
</feature>
<feature type="glycosylation site" description="N-linked (GlcNAc...) asparagine" evidence="4">
    <location>
        <position position="325"/>
    </location>
</feature>
<feature type="glycosylation site" description="N-linked (GlcNAc...) asparagine" evidence="4">
    <location>
        <position position="403"/>
    </location>
</feature>
<feature type="disulfide bond" evidence="1">
    <location>
        <begin position="159"/>
        <end position="181"/>
    </location>
</feature>
<feature type="disulfide bond" evidence="1">
    <location>
        <begin position="180"/>
        <end position="220"/>
    </location>
</feature>
<feature type="disulfide bond" evidence="1">
    <location>
        <begin position="187"/>
        <end position="213"/>
    </location>
</feature>
<feature type="disulfide bond" evidence="1">
    <location>
        <begin position="211"/>
        <end position="244"/>
    </location>
</feature>
<keyword id="KW-0106">Calcium</keyword>
<keyword id="KW-1003">Cell membrane</keyword>
<keyword id="KW-0970">Cilium biogenesis/degradation</keyword>
<keyword id="KW-0963">Cytoplasm</keyword>
<keyword id="KW-0206">Cytoskeleton</keyword>
<keyword id="KW-1015">Disulfide bond</keyword>
<keyword id="KW-0967">Endosome</keyword>
<keyword id="KW-0325">Glycoprotein</keyword>
<keyword id="KW-0378">Hydrolase</keyword>
<keyword id="KW-0443">Lipid metabolism</keyword>
<keyword id="KW-0467">Mast cell degranulation</keyword>
<keyword id="KW-0472">Membrane</keyword>
<keyword id="KW-0479">Metal-binding</keyword>
<keyword id="KW-1208">Phospholipid metabolism</keyword>
<keyword id="KW-1185">Reference proteome</keyword>
<keyword id="KW-0964">Secreted</keyword>
<keyword id="KW-0732">Signal</keyword>
<sequence>MGVLVVLLGVLSFLGRTLGGSPALHWDSTSCHLARPIPGRPLRSLSFLGKDAQGLALFHAHWDGHGRLQVCSRQDEPELTAAYGALCAGEITRGSFIHTPGPELQRALATLQSQWEACRGPAESPAGTREKRAAGQNGVPGIGRQWVKRGWTVPGTLWCGVGDSAGNSSELGVFQGPDLCCREHDRCPHNVSPFQYNYGIRNYRFHTISHCNCDARFQQCLQDQRDSVSDIMGVAFFNVLAIPCFVLEEQEACVEWYWWGGCRRYGSVPFARLQPRTFYNASWSSPATSLTPSPQNPALSRPQPMQHPQQWPSEWKESKSPSKTNATALQAPVASPGSDRASTVQLEVTHPGFQGTTGGRKPPGAHRACRSFRHLDQCEHQIGPQETKFQLFNSAHEPLFHCNCTRRLARFLRLHGPPVGASMLWELPGMTCFKLAPPLDCAEGKGCPRDPRAFKVSARHLLRLQQRRLQLQGTGTDNGQVWPSEDQGAPISFYNRCLQLT</sequence>
<reference key="1">
    <citation type="journal article" date="2005" name="BMC Genomics">
        <title>Characterization of 954 bovine full-CDS cDNA sequences.</title>
        <authorList>
            <person name="Harhay G.P."/>
            <person name="Sonstegard T.S."/>
            <person name="Keele J.W."/>
            <person name="Heaton M.P."/>
            <person name="Clawson M.L."/>
            <person name="Snelling W.M."/>
            <person name="Wiedmann R.T."/>
            <person name="Van Tassell C.P."/>
            <person name="Smith T.P.L."/>
        </authorList>
    </citation>
    <scope>NUCLEOTIDE SEQUENCE [LARGE SCALE MRNA]</scope>
</reference>
<dbReference type="EC" id="3.1.1.4" evidence="3"/>
<dbReference type="EMBL" id="BT025434">
    <property type="protein sequence ID" value="ABF57390.1"/>
    <property type="molecule type" value="mRNA"/>
</dbReference>
<dbReference type="SMR" id="Q1JPB9"/>
<dbReference type="FunCoup" id="Q1JPB9">
    <property type="interactions" value="276"/>
</dbReference>
<dbReference type="STRING" id="9913.ENSBTAP00000015876"/>
<dbReference type="Allergome" id="9634">
    <property type="allergen name" value="Bos d PLA2"/>
</dbReference>
<dbReference type="GlyCosmos" id="Q1JPB9">
    <property type="glycosylation" value="4 sites, No reported glycans"/>
</dbReference>
<dbReference type="GlyGen" id="Q1JPB9">
    <property type="glycosylation" value="4 sites"/>
</dbReference>
<dbReference type="InParanoid" id="Q1JPB9"/>
<dbReference type="OrthoDB" id="6075074at2759"/>
<dbReference type="Proteomes" id="UP000009136">
    <property type="component" value="Unplaced"/>
</dbReference>
<dbReference type="GO" id="GO:0005814">
    <property type="term" value="C:centriole"/>
    <property type="evidence" value="ECO:0000250"/>
    <property type="project" value="UniProtKB"/>
</dbReference>
<dbReference type="GO" id="GO:0005576">
    <property type="term" value="C:extracellular region"/>
    <property type="evidence" value="ECO:0007669"/>
    <property type="project" value="UniProtKB-SubCell"/>
</dbReference>
<dbReference type="GO" id="GO:0005886">
    <property type="term" value="C:plasma membrane"/>
    <property type="evidence" value="ECO:0007669"/>
    <property type="project" value="UniProtKB-SubCell"/>
</dbReference>
<dbReference type="GO" id="GO:0055037">
    <property type="term" value="C:recycling endosome"/>
    <property type="evidence" value="ECO:0000250"/>
    <property type="project" value="UniProtKB"/>
</dbReference>
<dbReference type="GO" id="GO:0047498">
    <property type="term" value="F:calcium-dependent phospholipase A2 activity"/>
    <property type="evidence" value="ECO:0000250"/>
    <property type="project" value="UniProtKB"/>
</dbReference>
<dbReference type="GO" id="GO:0046872">
    <property type="term" value="F:metal ion binding"/>
    <property type="evidence" value="ECO:0007669"/>
    <property type="project" value="UniProtKB-KW"/>
</dbReference>
<dbReference type="GO" id="GO:0050482">
    <property type="term" value="P:arachidonate secretion"/>
    <property type="evidence" value="ECO:0007669"/>
    <property type="project" value="InterPro"/>
</dbReference>
<dbReference type="GO" id="GO:0060271">
    <property type="term" value="P:cilium assembly"/>
    <property type="evidence" value="ECO:0000250"/>
    <property type="project" value="UniProtKB"/>
</dbReference>
<dbReference type="GO" id="GO:0034375">
    <property type="term" value="P:high-density lipoprotein particle remodeling"/>
    <property type="evidence" value="ECO:0000250"/>
    <property type="project" value="UniProtKB"/>
</dbReference>
<dbReference type="GO" id="GO:0034374">
    <property type="term" value="P:low-density lipoprotein particle remodeling"/>
    <property type="evidence" value="ECO:0000250"/>
    <property type="project" value="UniProtKB"/>
</dbReference>
<dbReference type="GO" id="GO:0043303">
    <property type="term" value="P:mast cell degranulation"/>
    <property type="evidence" value="ECO:0007669"/>
    <property type="project" value="UniProtKB-KW"/>
</dbReference>
<dbReference type="GO" id="GO:0043524">
    <property type="term" value="P:negative regulation of neuron apoptotic process"/>
    <property type="evidence" value="ECO:0000250"/>
    <property type="project" value="UniProtKB"/>
</dbReference>
<dbReference type="GO" id="GO:0046473">
    <property type="term" value="P:phosphatidic acid metabolic process"/>
    <property type="evidence" value="ECO:0000250"/>
    <property type="project" value="UniProtKB"/>
</dbReference>
<dbReference type="GO" id="GO:0046470">
    <property type="term" value="P:phosphatidylcholine metabolic process"/>
    <property type="evidence" value="ECO:0000250"/>
    <property type="project" value="UniProtKB"/>
</dbReference>
<dbReference type="GO" id="GO:0046337">
    <property type="term" value="P:phosphatidylethanolamine metabolic process"/>
    <property type="evidence" value="ECO:0000250"/>
    <property type="project" value="UniProtKB"/>
</dbReference>
<dbReference type="GO" id="GO:0046471">
    <property type="term" value="P:phosphatidylglycerol metabolic process"/>
    <property type="evidence" value="ECO:0000250"/>
    <property type="project" value="UniProtKB"/>
</dbReference>
<dbReference type="GO" id="GO:0046488">
    <property type="term" value="P:phosphatidylinositol metabolic process"/>
    <property type="evidence" value="ECO:0000250"/>
    <property type="project" value="UniProtKB"/>
</dbReference>
<dbReference type="GO" id="GO:0006658">
    <property type="term" value="P:phosphatidylserine metabolic process"/>
    <property type="evidence" value="ECO:0000250"/>
    <property type="project" value="UniProtKB"/>
</dbReference>
<dbReference type="GO" id="GO:0010744">
    <property type="term" value="P:positive regulation of macrophage derived foam cell differentiation"/>
    <property type="evidence" value="ECO:0000250"/>
    <property type="project" value="UniProtKB"/>
</dbReference>
<dbReference type="GO" id="GO:0010976">
    <property type="term" value="P:positive regulation of neuron projection development"/>
    <property type="evidence" value="ECO:0000250"/>
    <property type="project" value="UniProtKB"/>
</dbReference>
<dbReference type="GO" id="GO:2001135">
    <property type="term" value="P:regulation of endocytic recycling"/>
    <property type="evidence" value="ECO:0000250"/>
    <property type="project" value="UniProtKB"/>
</dbReference>
<dbReference type="CDD" id="cd04704">
    <property type="entry name" value="PLA2_bee_venom_like"/>
    <property type="match status" value="1"/>
</dbReference>
<dbReference type="FunFam" id="1.20.90.10:FF:000002">
    <property type="entry name" value="Phospholipase A2 group III"/>
    <property type="match status" value="1"/>
</dbReference>
<dbReference type="FunFam" id="1.20.90.10:FF:000012">
    <property type="entry name" value="Phospholipase A2 group III"/>
    <property type="match status" value="1"/>
</dbReference>
<dbReference type="Gene3D" id="1.20.90.10">
    <property type="entry name" value="Phospholipase A2 domain"/>
    <property type="match status" value="2"/>
</dbReference>
<dbReference type="InterPro" id="IPR016090">
    <property type="entry name" value="PLipase_A2_dom"/>
</dbReference>
<dbReference type="InterPro" id="IPR036444">
    <property type="entry name" value="PLipase_A2_dom_sf"/>
</dbReference>
<dbReference type="InterPro" id="IPR033113">
    <property type="entry name" value="PLipase_A2_His_AS"/>
</dbReference>
<dbReference type="PANTHER" id="PTHR12253">
    <property type="entry name" value="RH14732P"/>
    <property type="match status" value="1"/>
</dbReference>
<dbReference type="Pfam" id="PF05826">
    <property type="entry name" value="Phospholip_A2_2"/>
    <property type="match status" value="2"/>
</dbReference>
<dbReference type="SMART" id="SM00085">
    <property type="entry name" value="PA2c"/>
    <property type="match status" value="1"/>
</dbReference>
<dbReference type="SUPFAM" id="SSF48619">
    <property type="entry name" value="Phospholipase A2, PLA2"/>
    <property type="match status" value="2"/>
</dbReference>
<dbReference type="PROSITE" id="PS00118">
    <property type="entry name" value="PA2_HIS"/>
    <property type="match status" value="1"/>
</dbReference>
<gene>
    <name type="primary">PLA2G3</name>
</gene>
<evidence type="ECO:0000250" key="1">
    <source>
        <dbReference type="UniProtKB" id="P00630"/>
    </source>
</evidence>
<evidence type="ECO:0000250" key="2">
    <source>
        <dbReference type="UniProtKB" id="Q8BZT7"/>
    </source>
</evidence>
<evidence type="ECO:0000250" key="3">
    <source>
        <dbReference type="UniProtKB" id="Q9NZ20"/>
    </source>
</evidence>
<evidence type="ECO:0000255" key="4"/>
<evidence type="ECO:0000255" key="5">
    <source>
        <dbReference type="PROSITE-ProRule" id="PRU10035"/>
    </source>
</evidence>
<evidence type="ECO:0000256" key="6">
    <source>
        <dbReference type="SAM" id="MobiDB-lite"/>
    </source>
</evidence>
<evidence type="ECO:0000305" key="7"/>
<accession>Q1JPB9</accession>
<comment type="function">
    <text evidence="2 3">Secretory calcium-dependent phospholipase A2 that primarily targets extracellular phospholipids. Hydrolyzes the ester bond of the fatty acyl group attached at sn-2 position of phospholipids without apparent head group selectivity (By similarity). Contributes to phospholipid remodeling of low-density lipoprotein (LDL) and high-density lipoprotein (HDL) particles. Hydrolyzes LDL phospholipids releasing unsaturated fatty acids that regulate macrophage differentiation toward foam cells (By similarity). May act in an autocrine and paracrine manner. Secreted by immature mast cells, acts on nearby fibroblasts upstream to PTDGS to synthesize prostaglandin D2 (PGD2), which in turn promotes mast cell maturation and degranulation via PTGDR (By similarity). Secreted by epididymal epithelium, acts on immature sperm cells within the duct, modulating the degree of unsaturation of the fatty acyl components of phosphatidylcholines required for acrosome assembly and sperm cell motility. Facilitates the replacement of fatty acyl chains in phosphatidylcholines in sperm membranes from omega-6 and omega-9 to omega-3 polyunsaturated fatty acids (PUFAs). Coupled to lipoxygenase pathway, may process omega-6 PUFAs to generate oxygenated lipid mediators in the male reproductive tract (By similarity). At pericentrosomal preciliary compartment, negatively regulates ciliogenesis likely by regulating endocytotic recycling of ciliary membrane protein (By similarity). Coupled to cyclooxygenase pathway provides arachidonate to generate prostaglandin E2 (PGE2), a potent immunomodulatory lipid in inflammation and tumorigenesis (By similarity). At colonic epithelial barrier, preferentially hydrolyzes phospholipids having arachidonate and docosahexaenoate at sn-2 position, contributing to the generation of oxygenated metabolites involved in colonic stem cell homeostasis (By similarity). Releases C16:0 and C18:0 lysophosphatidylcholine subclasses from neuron plasma membranes and promotes neurite outgrowth and neuron survival (By similarity).</text>
</comment>
<comment type="catalytic activity">
    <reaction evidence="3">
        <text>a 1,2-diacyl-sn-glycero-3-phosphocholine + H2O = a 1-acyl-sn-glycero-3-phosphocholine + a fatty acid + H(+)</text>
        <dbReference type="Rhea" id="RHEA:15801"/>
        <dbReference type="ChEBI" id="CHEBI:15377"/>
        <dbReference type="ChEBI" id="CHEBI:15378"/>
        <dbReference type="ChEBI" id="CHEBI:28868"/>
        <dbReference type="ChEBI" id="CHEBI:57643"/>
        <dbReference type="ChEBI" id="CHEBI:58168"/>
        <dbReference type="EC" id="3.1.1.4"/>
    </reaction>
    <physiologicalReaction direction="left-to-right" evidence="3">
        <dbReference type="Rhea" id="RHEA:15802"/>
    </physiologicalReaction>
</comment>
<comment type="catalytic activity">
    <reaction evidence="3">
        <text>1-hexadecanoyl-2-(9Z,12Z-octadecadienoyl)-sn-glycero-3-phosphocholine + H2O = (9Z,12Z)-octadecadienoate + 1-hexadecanoyl-sn-glycero-3-phosphocholine + H(+)</text>
        <dbReference type="Rhea" id="RHEA:40811"/>
        <dbReference type="ChEBI" id="CHEBI:15377"/>
        <dbReference type="ChEBI" id="CHEBI:15378"/>
        <dbReference type="ChEBI" id="CHEBI:30245"/>
        <dbReference type="ChEBI" id="CHEBI:72998"/>
        <dbReference type="ChEBI" id="CHEBI:73002"/>
    </reaction>
    <physiologicalReaction direction="left-to-right" evidence="3">
        <dbReference type="Rhea" id="RHEA:40812"/>
    </physiologicalReaction>
</comment>
<comment type="catalytic activity">
    <reaction evidence="3">
        <text>1-hexadecanoyl-2-(5Z,8Z,11Z,14Z-eicosatetraenoyl)-sn-glycero-3-phosphocholine + H2O = 1-hexadecanoyl-sn-glycero-3-phosphocholine + (5Z,8Z,11Z,14Z)-eicosatetraenoate + H(+)</text>
        <dbReference type="Rhea" id="RHEA:40427"/>
        <dbReference type="ChEBI" id="CHEBI:15377"/>
        <dbReference type="ChEBI" id="CHEBI:15378"/>
        <dbReference type="ChEBI" id="CHEBI:32395"/>
        <dbReference type="ChEBI" id="CHEBI:72998"/>
        <dbReference type="ChEBI" id="CHEBI:73003"/>
    </reaction>
    <physiologicalReaction direction="left-to-right" evidence="3">
        <dbReference type="Rhea" id="RHEA:40428"/>
    </physiologicalReaction>
</comment>
<comment type="catalytic activity">
    <reaction evidence="3">
        <text>1-hexadecanoyl-2-(9Z,12Z-octadecadienoyl)-sn-glycero-3-phosphoethanolamine + H2O = 1-hexadecanoyl-sn-glycero-3-phosphoethanolamine + (9Z,12Z)-octadecadienoate + H(+)</text>
        <dbReference type="Rhea" id="RHEA:40815"/>
        <dbReference type="ChEBI" id="CHEBI:15377"/>
        <dbReference type="ChEBI" id="CHEBI:15378"/>
        <dbReference type="ChEBI" id="CHEBI:30245"/>
        <dbReference type="ChEBI" id="CHEBI:73004"/>
        <dbReference type="ChEBI" id="CHEBI:73008"/>
    </reaction>
    <physiologicalReaction direction="left-to-right" evidence="3">
        <dbReference type="Rhea" id="RHEA:40816"/>
    </physiologicalReaction>
</comment>
<comment type="catalytic activity">
    <reaction evidence="3">
        <text>1-hexadecanoyl-2-(5Z,8Z,11Z,14Z-eicosatetraenoyl)-sn-glycero-3-phosphoethanolamine + H2O = 1-hexadecanoyl-sn-glycero-3-phosphoethanolamine + (5Z,8Z,11Z,14Z)-eicosatetraenoate + H(+)</text>
        <dbReference type="Rhea" id="RHEA:40431"/>
        <dbReference type="ChEBI" id="CHEBI:15377"/>
        <dbReference type="ChEBI" id="CHEBI:15378"/>
        <dbReference type="ChEBI" id="CHEBI:32395"/>
        <dbReference type="ChEBI" id="CHEBI:73004"/>
        <dbReference type="ChEBI" id="CHEBI:73009"/>
    </reaction>
    <physiologicalReaction direction="left-to-right" evidence="3">
        <dbReference type="Rhea" id="RHEA:40432"/>
    </physiologicalReaction>
</comment>
<comment type="cofactor">
    <cofactor evidence="1">
        <name>Ca(2+)</name>
        <dbReference type="ChEBI" id="CHEBI:29108"/>
    </cofactor>
    <text evidence="1">Binds 1 Ca(2+) ion.</text>
</comment>
<comment type="subcellular location">
    <subcellularLocation>
        <location evidence="3">Secreted</location>
    </subcellularLocation>
    <subcellularLocation>
        <location evidence="3">Cell membrane</location>
    </subcellularLocation>
    <subcellularLocation>
        <location evidence="3">Cytoplasm</location>
        <location evidence="3">Cytoskeleton</location>
        <location evidence="3">Microtubule organizing center</location>
        <location evidence="3">Centrosome</location>
        <location evidence="3">Centriole</location>
    </subcellularLocation>
    <subcellularLocation>
        <location evidence="3">Recycling endosome</location>
    </subcellularLocation>
    <text evidence="3">Localized at pericentrosomal preciliary compartment.</text>
</comment>
<comment type="domain">
    <text evidence="3">The phospholipase A2-like domain represents the fully processed form after N- and C-termini are cleaved off. It is the secreted mature form found in biological fluids.</text>
</comment>
<comment type="PTM">
    <text evidence="3">N-glycosylation does not affect the catalytic activity, but is required for proper secretion. A nonglycosylated form was observed in several cell types.</text>
</comment>
<comment type="PTM">
    <text evidence="3">In several cell types, the N- and C-termini are cleaved off.</text>
</comment>
<comment type="similarity">
    <text evidence="7">Belongs to the phospholipase A2 family.</text>
</comment>
<proteinExistence type="evidence at transcript level"/>
<name>PA2G3_BOVIN</name>
<protein>
    <recommendedName>
        <fullName>Group 3 secretory phospholipase A2</fullName>
        <ecNumber evidence="3">3.1.1.4</ecNumber>
    </recommendedName>
    <alternativeName>
        <fullName>Group III secretory phospholipase A2</fullName>
        <shortName>GIII sPLA2</shortName>
        <shortName>sPLA2-III</shortName>
    </alternativeName>
    <alternativeName>
        <fullName>Phosphatidylcholine 2-acylhydrolase 3</fullName>
    </alternativeName>
</protein>